<accession>B1ZLJ9</accession>
<name>RS12_METPB</name>
<organism>
    <name type="scientific">Methylorubrum populi (strain ATCC BAA-705 / NCIMB 13946 / BJ001)</name>
    <name type="common">Methylobacterium populi</name>
    <dbReference type="NCBI Taxonomy" id="441620"/>
    <lineage>
        <taxon>Bacteria</taxon>
        <taxon>Pseudomonadati</taxon>
        <taxon>Pseudomonadota</taxon>
        <taxon>Alphaproteobacteria</taxon>
        <taxon>Hyphomicrobiales</taxon>
        <taxon>Methylobacteriaceae</taxon>
        <taxon>Methylorubrum</taxon>
    </lineage>
</organism>
<reference key="1">
    <citation type="submission" date="2008-04" db="EMBL/GenBank/DDBJ databases">
        <title>Complete sequence of chromosome of Methylobacterium populi BJ001.</title>
        <authorList>
            <consortium name="US DOE Joint Genome Institute"/>
            <person name="Copeland A."/>
            <person name="Lucas S."/>
            <person name="Lapidus A."/>
            <person name="Glavina del Rio T."/>
            <person name="Dalin E."/>
            <person name="Tice H."/>
            <person name="Bruce D."/>
            <person name="Goodwin L."/>
            <person name="Pitluck S."/>
            <person name="Chertkov O."/>
            <person name="Brettin T."/>
            <person name="Detter J.C."/>
            <person name="Han C."/>
            <person name="Kuske C.R."/>
            <person name="Schmutz J."/>
            <person name="Larimer F."/>
            <person name="Land M."/>
            <person name="Hauser L."/>
            <person name="Kyrpides N."/>
            <person name="Mikhailova N."/>
            <person name="Marx C."/>
            <person name="Richardson P."/>
        </authorList>
    </citation>
    <scope>NUCLEOTIDE SEQUENCE [LARGE SCALE GENOMIC DNA]</scope>
    <source>
        <strain>ATCC BAA-705 / NCIMB 13946 / BJ001</strain>
    </source>
</reference>
<sequence length="123" mass="13805">MPTINQLIAQPRKAQKARNKVPALNACPQKRGVCTRVYTTTPKKPNSALRKVAKVRLTNGFEVIGYIPGEGHNLQEHSVVMIRGGRVKDLPGVRYHILRGVLDTQGVKNRKQRRSKYGAKRPK</sequence>
<comment type="function">
    <text evidence="2">With S4 and S5 plays an important role in translational accuracy.</text>
</comment>
<comment type="function">
    <text evidence="2">Interacts with and stabilizes bases of the 16S rRNA that are involved in tRNA selection in the A site and with the mRNA backbone. Located at the interface of the 30S and 50S subunits, it traverses the body of the 30S subunit contacting proteins on the other side and probably holding the rRNA structure together. The combined cluster of proteins S8, S12 and S17 appears to hold together the shoulder and platform of the 30S subunit.</text>
</comment>
<comment type="subunit">
    <text evidence="2">Part of the 30S ribosomal subunit. Contacts proteins S8 and S17. May interact with IF1 in the 30S initiation complex.</text>
</comment>
<comment type="similarity">
    <text evidence="2">Belongs to the universal ribosomal protein uS12 family.</text>
</comment>
<gene>
    <name evidence="2" type="primary">rpsL</name>
    <name type="ordered locus">Mpop_2118</name>
</gene>
<proteinExistence type="inferred from homology"/>
<keyword id="KW-0488">Methylation</keyword>
<keyword id="KW-0687">Ribonucleoprotein</keyword>
<keyword id="KW-0689">Ribosomal protein</keyword>
<keyword id="KW-0694">RNA-binding</keyword>
<keyword id="KW-0699">rRNA-binding</keyword>
<keyword id="KW-0820">tRNA-binding</keyword>
<protein>
    <recommendedName>
        <fullName evidence="2">Small ribosomal subunit protein uS12</fullName>
    </recommendedName>
    <alternativeName>
        <fullName evidence="3">30S ribosomal protein S12</fullName>
    </alternativeName>
</protein>
<dbReference type="EMBL" id="CP001029">
    <property type="protein sequence ID" value="ACB80280.1"/>
    <property type="molecule type" value="Genomic_DNA"/>
</dbReference>
<dbReference type="RefSeq" id="WP_004447775.1">
    <property type="nucleotide sequence ID" value="NC_010725.1"/>
</dbReference>
<dbReference type="SMR" id="B1ZLJ9"/>
<dbReference type="STRING" id="441620.Mpop_2118"/>
<dbReference type="GeneID" id="72989845"/>
<dbReference type="KEGG" id="mpo:Mpop_2118"/>
<dbReference type="eggNOG" id="COG0048">
    <property type="taxonomic scope" value="Bacteria"/>
</dbReference>
<dbReference type="HOGENOM" id="CLU_104295_1_2_5"/>
<dbReference type="OrthoDB" id="9802366at2"/>
<dbReference type="Proteomes" id="UP000007136">
    <property type="component" value="Chromosome"/>
</dbReference>
<dbReference type="GO" id="GO:0015935">
    <property type="term" value="C:small ribosomal subunit"/>
    <property type="evidence" value="ECO:0007669"/>
    <property type="project" value="InterPro"/>
</dbReference>
<dbReference type="GO" id="GO:0019843">
    <property type="term" value="F:rRNA binding"/>
    <property type="evidence" value="ECO:0007669"/>
    <property type="project" value="UniProtKB-UniRule"/>
</dbReference>
<dbReference type="GO" id="GO:0003735">
    <property type="term" value="F:structural constituent of ribosome"/>
    <property type="evidence" value="ECO:0007669"/>
    <property type="project" value="InterPro"/>
</dbReference>
<dbReference type="GO" id="GO:0000049">
    <property type="term" value="F:tRNA binding"/>
    <property type="evidence" value="ECO:0007669"/>
    <property type="project" value="UniProtKB-UniRule"/>
</dbReference>
<dbReference type="GO" id="GO:0006412">
    <property type="term" value="P:translation"/>
    <property type="evidence" value="ECO:0007669"/>
    <property type="project" value="UniProtKB-UniRule"/>
</dbReference>
<dbReference type="CDD" id="cd03368">
    <property type="entry name" value="Ribosomal_S12"/>
    <property type="match status" value="1"/>
</dbReference>
<dbReference type="FunFam" id="2.40.50.140:FF:000001">
    <property type="entry name" value="30S ribosomal protein S12"/>
    <property type="match status" value="1"/>
</dbReference>
<dbReference type="Gene3D" id="2.40.50.140">
    <property type="entry name" value="Nucleic acid-binding proteins"/>
    <property type="match status" value="1"/>
</dbReference>
<dbReference type="HAMAP" id="MF_00403_B">
    <property type="entry name" value="Ribosomal_uS12_B"/>
    <property type="match status" value="1"/>
</dbReference>
<dbReference type="InterPro" id="IPR012340">
    <property type="entry name" value="NA-bd_OB-fold"/>
</dbReference>
<dbReference type="InterPro" id="IPR006032">
    <property type="entry name" value="Ribosomal_uS12"/>
</dbReference>
<dbReference type="InterPro" id="IPR005679">
    <property type="entry name" value="Ribosomal_uS12_bac"/>
</dbReference>
<dbReference type="NCBIfam" id="TIGR00981">
    <property type="entry name" value="rpsL_bact"/>
    <property type="match status" value="1"/>
</dbReference>
<dbReference type="PANTHER" id="PTHR11652">
    <property type="entry name" value="30S RIBOSOMAL PROTEIN S12 FAMILY MEMBER"/>
    <property type="match status" value="1"/>
</dbReference>
<dbReference type="Pfam" id="PF00164">
    <property type="entry name" value="Ribosom_S12_S23"/>
    <property type="match status" value="1"/>
</dbReference>
<dbReference type="PIRSF" id="PIRSF002133">
    <property type="entry name" value="Ribosomal_S12/S23"/>
    <property type="match status" value="1"/>
</dbReference>
<dbReference type="PRINTS" id="PR01034">
    <property type="entry name" value="RIBOSOMALS12"/>
</dbReference>
<dbReference type="SUPFAM" id="SSF50249">
    <property type="entry name" value="Nucleic acid-binding proteins"/>
    <property type="match status" value="1"/>
</dbReference>
<dbReference type="PROSITE" id="PS00055">
    <property type="entry name" value="RIBOSOMAL_S12"/>
    <property type="match status" value="1"/>
</dbReference>
<feature type="chain" id="PRO_1000194191" description="Small ribosomal subunit protein uS12">
    <location>
        <begin position="1"/>
        <end position="123"/>
    </location>
</feature>
<feature type="modified residue" description="3-methylthioaspartic acid" evidence="1">
    <location>
        <position position="89"/>
    </location>
</feature>
<evidence type="ECO:0000250" key="1"/>
<evidence type="ECO:0000255" key="2">
    <source>
        <dbReference type="HAMAP-Rule" id="MF_00403"/>
    </source>
</evidence>
<evidence type="ECO:0000305" key="3"/>